<gene>
    <name type="primary">CYCB1-3</name>
    <name type="synonym">CYC2</name>
    <name type="ordered locus">At3g11520</name>
    <name type="ORF">F24K9.20</name>
</gene>
<accession>Q39069</accession>
<accession>Q84MB0</accession>
<accession>Q9CAX5</accession>
<name>CCB13_ARATH</name>
<protein>
    <recommendedName>
        <fullName>Cyclin-B1-3</fullName>
    </recommendedName>
    <alternativeName>
        <fullName>Cyc2-At</fullName>
    </alternativeName>
    <alternativeName>
        <fullName>G2/mitotic-specific cyclin-B1-3</fullName>
        <shortName>CycB1;3</shortName>
    </alternativeName>
</protein>
<reference key="1">
    <citation type="journal article" date="2000" name="Nature">
        <title>Sequence and analysis of chromosome 3 of the plant Arabidopsis thaliana.</title>
        <authorList>
            <person name="Salanoubat M."/>
            <person name="Lemcke K."/>
            <person name="Rieger M."/>
            <person name="Ansorge W."/>
            <person name="Unseld M."/>
            <person name="Fartmann B."/>
            <person name="Valle G."/>
            <person name="Bloecker H."/>
            <person name="Perez-Alonso M."/>
            <person name="Obermaier B."/>
            <person name="Delseny M."/>
            <person name="Boutry M."/>
            <person name="Grivell L.A."/>
            <person name="Mache R."/>
            <person name="Puigdomenech P."/>
            <person name="De Simone V."/>
            <person name="Choisne N."/>
            <person name="Artiguenave F."/>
            <person name="Robert C."/>
            <person name="Brottier P."/>
            <person name="Wincker P."/>
            <person name="Cattolico L."/>
            <person name="Weissenbach J."/>
            <person name="Saurin W."/>
            <person name="Quetier F."/>
            <person name="Schaefer M."/>
            <person name="Mueller-Auer S."/>
            <person name="Gabel C."/>
            <person name="Fuchs M."/>
            <person name="Benes V."/>
            <person name="Wurmbach E."/>
            <person name="Drzonek H."/>
            <person name="Erfle H."/>
            <person name="Jordan N."/>
            <person name="Bangert S."/>
            <person name="Wiedelmann R."/>
            <person name="Kranz H."/>
            <person name="Voss H."/>
            <person name="Holland R."/>
            <person name="Brandt P."/>
            <person name="Nyakatura G."/>
            <person name="Vezzi A."/>
            <person name="D'Angelo M."/>
            <person name="Pallavicini A."/>
            <person name="Toppo S."/>
            <person name="Simionati B."/>
            <person name="Conrad A."/>
            <person name="Hornischer K."/>
            <person name="Kauer G."/>
            <person name="Loehnert T.-H."/>
            <person name="Nordsiek G."/>
            <person name="Reichelt J."/>
            <person name="Scharfe M."/>
            <person name="Schoen O."/>
            <person name="Bargues M."/>
            <person name="Terol J."/>
            <person name="Climent J."/>
            <person name="Navarro P."/>
            <person name="Collado C."/>
            <person name="Perez-Perez A."/>
            <person name="Ottenwaelder B."/>
            <person name="Duchemin D."/>
            <person name="Cooke R."/>
            <person name="Laudie M."/>
            <person name="Berger-Llauro C."/>
            <person name="Purnelle B."/>
            <person name="Masuy D."/>
            <person name="de Haan M."/>
            <person name="Maarse A.C."/>
            <person name="Alcaraz J.-P."/>
            <person name="Cottet A."/>
            <person name="Casacuberta E."/>
            <person name="Monfort A."/>
            <person name="Argiriou A."/>
            <person name="Flores M."/>
            <person name="Liguori R."/>
            <person name="Vitale D."/>
            <person name="Mannhaupt G."/>
            <person name="Haase D."/>
            <person name="Schoof H."/>
            <person name="Rudd S."/>
            <person name="Zaccaria P."/>
            <person name="Mewes H.-W."/>
            <person name="Mayer K.F.X."/>
            <person name="Kaul S."/>
            <person name="Town C.D."/>
            <person name="Koo H.L."/>
            <person name="Tallon L.J."/>
            <person name="Jenkins J."/>
            <person name="Rooney T."/>
            <person name="Rizzo M."/>
            <person name="Walts A."/>
            <person name="Utterback T."/>
            <person name="Fujii C.Y."/>
            <person name="Shea T.P."/>
            <person name="Creasy T.H."/>
            <person name="Haas B."/>
            <person name="Maiti R."/>
            <person name="Wu D."/>
            <person name="Peterson J."/>
            <person name="Van Aken S."/>
            <person name="Pai G."/>
            <person name="Militscher J."/>
            <person name="Sellers P."/>
            <person name="Gill J.E."/>
            <person name="Feldblyum T.V."/>
            <person name="Preuss D."/>
            <person name="Lin X."/>
            <person name="Nierman W.C."/>
            <person name="Salzberg S.L."/>
            <person name="White O."/>
            <person name="Venter J.C."/>
            <person name="Fraser C.M."/>
            <person name="Kaneko T."/>
            <person name="Nakamura Y."/>
            <person name="Sato S."/>
            <person name="Kato T."/>
            <person name="Asamizu E."/>
            <person name="Sasamoto S."/>
            <person name="Kimura T."/>
            <person name="Idesawa K."/>
            <person name="Kawashima K."/>
            <person name="Kishida Y."/>
            <person name="Kiyokawa C."/>
            <person name="Kohara M."/>
            <person name="Matsumoto M."/>
            <person name="Matsuno A."/>
            <person name="Muraki A."/>
            <person name="Nakayama S."/>
            <person name="Nakazaki N."/>
            <person name="Shinpo S."/>
            <person name="Takeuchi C."/>
            <person name="Wada T."/>
            <person name="Watanabe A."/>
            <person name="Yamada M."/>
            <person name="Yasuda M."/>
            <person name="Tabata S."/>
        </authorList>
    </citation>
    <scope>NUCLEOTIDE SEQUENCE [LARGE SCALE GENOMIC DNA]</scope>
    <source>
        <strain>cv. Columbia</strain>
    </source>
</reference>
<reference key="2">
    <citation type="journal article" date="2017" name="Plant J.">
        <title>Araport11: a complete reannotation of the Arabidopsis thaliana reference genome.</title>
        <authorList>
            <person name="Cheng C.Y."/>
            <person name="Krishnakumar V."/>
            <person name="Chan A.P."/>
            <person name="Thibaud-Nissen F."/>
            <person name="Schobel S."/>
            <person name="Town C.D."/>
        </authorList>
    </citation>
    <scope>GENOME REANNOTATION</scope>
    <source>
        <strain>cv. Columbia</strain>
    </source>
</reference>
<reference key="3">
    <citation type="journal article" date="2003" name="Science">
        <title>Empirical analysis of transcriptional activity in the Arabidopsis genome.</title>
        <authorList>
            <person name="Yamada K."/>
            <person name="Lim J."/>
            <person name="Dale J.M."/>
            <person name="Chen H."/>
            <person name="Shinn P."/>
            <person name="Palm C.J."/>
            <person name="Southwick A.M."/>
            <person name="Wu H.C."/>
            <person name="Kim C.J."/>
            <person name="Nguyen M."/>
            <person name="Pham P.K."/>
            <person name="Cheuk R.F."/>
            <person name="Karlin-Newmann G."/>
            <person name="Liu S.X."/>
            <person name="Lam B."/>
            <person name="Sakano H."/>
            <person name="Wu T."/>
            <person name="Yu G."/>
            <person name="Miranda M."/>
            <person name="Quach H.L."/>
            <person name="Tripp M."/>
            <person name="Chang C.H."/>
            <person name="Lee J.M."/>
            <person name="Toriumi M.J."/>
            <person name="Chan M.M."/>
            <person name="Tang C.C."/>
            <person name="Onodera C.S."/>
            <person name="Deng J.M."/>
            <person name="Akiyama K."/>
            <person name="Ansari Y."/>
            <person name="Arakawa T."/>
            <person name="Banh J."/>
            <person name="Banno F."/>
            <person name="Bowser L."/>
            <person name="Brooks S.Y."/>
            <person name="Carninci P."/>
            <person name="Chao Q."/>
            <person name="Choy N."/>
            <person name="Enju A."/>
            <person name="Goldsmith A.D."/>
            <person name="Gurjal M."/>
            <person name="Hansen N.F."/>
            <person name="Hayashizaki Y."/>
            <person name="Johnson-Hopson C."/>
            <person name="Hsuan V.W."/>
            <person name="Iida K."/>
            <person name="Karnes M."/>
            <person name="Khan S."/>
            <person name="Koesema E."/>
            <person name="Ishida J."/>
            <person name="Jiang P.X."/>
            <person name="Jones T."/>
            <person name="Kawai J."/>
            <person name="Kamiya A."/>
            <person name="Meyers C."/>
            <person name="Nakajima M."/>
            <person name="Narusaka M."/>
            <person name="Seki M."/>
            <person name="Sakurai T."/>
            <person name="Satou M."/>
            <person name="Tamse R."/>
            <person name="Vaysberg M."/>
            <person name="Wallender E.K."/>
            <person name="Wong C."/>
            <person name="Yamamura Y."/>
            <person name="Yuan S."/>
            <person name="Shinozaki K."/>
            <person name="Davis R.W."/>
            <person name="Theologis A."/>
            <person name="Ecker J.R."/>
        </authorList>
    </citation>
    <scope>NUCLEOTIDE SEQUENCE [LARGE SCALE MRNA]</scope>
    <source>
        <strain>cv. Columbia</strain>
    </source>
</reference>
<reference key="4">
    <citation type="submission" date="2006-07" db="EMBL/GenBank/DDBJ databases">
        <title>Large-scale analysis of RIKEN Arabidopsis full-length (RAFL) cDNAs.</title>
        <authorList>
            <person name="Totoki Y."/>
            <person name="Seki M."/>
            <person name="Ishida J."/>
            <person name="Nakajima M."/>
            <person name="Enju A."/>
            <person name="Kamiya A."/>
            <person name="Narusaka M."/>
            <person name="Shin-i T."/>
            <person name="Nakagawa M."/>
            <person name="Sakamoto N."/>
            <person name="Oishi K."/>
            <person name="Kohara Y."/>
            <person name="Kobayashi M."/>
            <person name="Toyoda A."/>
            <person name="Sakaki Y."/>
            <person name="Sakurai T."/>
            <person name="Iida K."/>
            <person name="Akiyama K."/>
            <person name="Satou M."/>
            <person name="Toyoda T."/>
            <person name="Konagaya A."/>
            <person name="Carninci P."/>
            <person name="Kawai J."/>
            <person name="Hayashizaki Y."/>
            <person name="Shinozaki K."/>
        </authorList>
    </citation>
    <scope>NUCLEOTIDE SEQUENCE [LARGE SCALE MRNA]</scope>
    <source>
        <strain>cv. Columbia</strain>
    </source>
</reference>
<reference key="5">
    <citation type="journal article" date="1994" name="Biochim. Biophys. Acta">
        <title>Cloning of a family of cyclins from Arabidopsis thaliana.</title>
        <authorList>
            <person name="Day I.S."/>
            <person name="Reddy A.S."/>
        </authorList>
    </citation>
    <scope>NUCLEOTIDE SEQUENCE [MRNA] OF 190-253</scope>
    <source>
        <tissue>Flower meristem</tissue>
    </source>
</reference>
<reference key="6">
    <citation type="journal article" date="1996" name="Plant Physiol.">
        <title>Modulation of cyclin transcript levels in cultured cells of Arabidopsis thaliana.</title>
        <authorList>
            <person name="Fuerst R.A.U."/>
            <person name="Soni R."/>
            <person name="Murray J.A.H."/>
            <person name="Lindsey K."/>
        </authorList>
    </citation>
    <scope>DEVELOPMENTAL STAGE</scope>
</reference>
<reference key="7">
    <citation type="journal article" date="1998" name="Plant Mol. Biol.">
        <title>Isolation and characterization of two cyclin-like cDNAs from Arabidopsis.</title>
        <authorList>
            <person name="Day I.S."/>
            <person name="Reddy A.S."/>
        </authorList>
    </citation>
    <scope>TISSUE SPECIFICITY</scope>
</reference>
<reference key="8">
    <citation type="journal article" date="2004" name="Plant Physiol.">
        <title>Genome-wide analysis of the cyclin family in Arabidopsis and comparative phylogenetic analysis of plant cyclin-like proteins.</title>
        <authorList>
            <person name="Wang G."/>
            <person name="Kong H."/>
            <person name="Sun Y."/>
            <person name="Zhang X."/>
            <person name="Zhang W."/>
            <person name="Altman N."/>
            <person name="dePamphilis C.W."/>
            <person name="Ma H."/>
        </authorList>
    </citation>
    <scope>GENE FAMILY</scope>
    <scope>NOMENCLATURE</scope>
</reference>
<proteinExistence type="evidence at transcript level"/>
<feature type="chain" id="PRO_0000287005" description="Cyclin-B1-3">
    <location>
        <begin position="1"/>
        <end position="414"/>
    </location>
</feature>
<dbReference type="EMBL" id="AC008153">
    <property type="protein sequence ID" value="AAG51435.1"/>
    <property type="status" value="ALT_SEQ"/>
    <property type="molecule type" value="Genomic_DNA"/>
</dbReference>
<dbReference type="EMBL" id="CP002686">
    <property type="protein sequence ID" value="AEE75057.1"/>
    <property type="molecule type" value="Genomic_DNA"/>
</dbReference>
<dbReference type="EMBL" id="BT006437">
    <property type="protein sequence ID" value="AAP21245.1"/>
    <property type="molecule type" value="mRNA"/>
</dbReference>
<dbReference type="EMBL" id="AK227951">
    <property type="protein sequence ID" value="BAE99919.1"/>
    <property type="molecule type" value="mRNA"/>
</dbReference>
<dbReference type="EMBL" id="L27224">
    <property type="protein sequence ID" value="AAA19879.1"/>
    <property type="molecule type" value="mRNA"/>
</dbReference>
<dbReference type="PIR" id="S45294">
    <property type="entry name" value="S45294"/>
</dbReference>
<dbReference type="RefSeq" id="NP_187759.2">
    <property type="nucleotide sequence ID" value="NM_111985.5"/>
</dbReference>
<dbReference type="SMR" id="Q39069"/>
<dbReference type="BioGRID" id="5659">
    <property type="interactions" value="12"/>
</dbReference>
<dbReference type="FunCoup" id="Q39069">
    <property type="interactions" value="1410"/>
</dbReference>
<dbReference type="IntAct" id="Q39069">
    <property type="interactions" value="10"/>
</dbReference>
<dbReference type="STRING" id="3702.Q39069"/>
<dbReference type="PaxDb" id="3702-AT3G11520.1"/>
<dbReference type="ProteomicsDB" id="239100"/>
<dbReference type="DNASU" id="820325"/>
<dbReference type="EnsemblPlants" id="AT3G11520.1">
    <property type="protein sequence ID" value="AT3G11520.1"/>
    <property type="gene ID" value="AT3G11520"/>
</dbReference>
<dbReference type="GeneID" id="820325"/>
<dbReference type="Gramene" id="AT3G11520.1">
    <property type="protein sequence ID" value="AT3G11520.1"/>
    <property type="gene ID" value="AT3G11520"/>
</dbReference>
<dbReference type="KEGG" id="ath:AT3G11520"/>
<dbReference type="Araport" id="AT3G11520"/>
<dbReference type="TAIR" id="AT3G11520">
    <property type="gene designation" value="CYCB1"/>
</dbReference>
<dbReference type="eggNOG" id="KOG0653">
    <property type="taxonomic scope" value="Eukaryota"/>
</dbReference>
<dbReference type="HOGENOM" id="CLU_020695_0_3_1"/>
<dbReference type="InParanoid" id="Q39069"/>
<dbReference type="OMA" id="LTMHIID"/>
<dbReference type="PhylomeDB" id="Q39069"/>
<dbReference type="PRO" id="PR:Q39069"/>
<dbReference type="Proteomes" id="UP000006548">
    <property type="component" value="Chromosome 3"/>
</dbReference>
<dbReference type="ExpressionAtlas" id="Q39069">
    <property type="expression patterns" value="baseline and differential"/>
</dbReference>
<dbReference type="GO" id="GO:0016538">
    <property type="term" value="F:cyclin-dependent protein serine/threonine kinase regulator activity"/>
    <property type="evidence" value="ECO:0007669"/>
    <property type="project" value="InterPro"/>
</dbReference>
<dbReference type="GO" id="GO:0051301">
    <property type="term" value="P:cell division"/>
    <property type="evidence" value="ECO:0007669"/>
    <property type="project" value="UniProtKB-KW"/>
</dbReference>
<dbReference type="GO" id="GO:0044772">
    <property type="term" value="P:mitotic cell cycle phase transition"/>
    <property type="evidence" value="ECO:0007669"/>
    <property type="project" value="InterPro"/>
</dbReference>
<dbReference type="CDD" id="cd20567">
    <property type="entry name" value="CYCLIN_AtCycB-like_rpt1"/>
    <property type="match status" value="1"/>
</dbReference>
<dbReference type="CDD" id="cd20511">
    <property type="entry name" value="CYCLIN_AtCycB-like_rpt2"/>
    <property type="match status" value="1"/>
</dbReference>
<dbReference type="FunFam" id="1.10.472.10:FF:000001">
    <property type="entry name" value="G2/mitotic-specific cyclin"/>
    <property type="match status" value="1"/>
</dbReference>
<dbReference type="FunFam" id="1.10.472.10:FF:000032">
    <property type="entry name" value="G2/mitotic-specific cyclin-1"/>
    <property type="match status" value="1"/>
</dbReference>
<dbReference type="Gene3D" id="1.10.472.10">
    <property type="entry name" value="Cyclin-like"/>
    <property type="match status" value="2"/>
</dbReference>
<dbReference type="InterPro" id="IPR039361">
    <property type="entry name" value="Cyclin"/>
</dbReference>
<dbReference type="InterPro" id="IPR013763">
    <property type="entry name" value="Cyclin-like_dom"/>
</dbReference>
<dbReference type="InterPro" id="IPR036915">
    <property type="entry name" value="Cyclin-like_sf"/>
</dbReference>
<dbReference type="InterPro" id="IPR046965">
    <property type="entry name" value="Cyclin_A/B-like"/>
</dbReference>
<dbReference type="InterPro" id="IPR004367">
    <property type="entry name" value="Cyclin_C-dom"/>
</dbReference>
<dbReference type="InterPro" id="IPR006671">
    <property type="entry name" value="Cyclin_N"/>
</dbReference>
<dbReference type="InterPro" id="IPR048258">
    <property type="entry name" value="Cyclins_cyclin-box"/>
</dbReference>
<dbReference type="PANTHER" id="PTHR10177">
    <property type="entry name" value="CYCLINS"/>
    <property type="match status" value="1"/>
</dbReference>
<dbReference type="Pfam" id="PF02984">
    <property type="entry name" value="Cyclin_C"/>
    <property type="match status" value="1"/>
</dbReference>
<dbReference type="Pfam" id="PF00134">
    <property type="entry name" value="Cyclin_N"/>
    <property type="match status" value="1"/>
</dbReference>
<dbReference type="PIRSF" id="PIRSF001771">
    <property type="entry name" value="Cyclin_A_B_D_E"/>
    <property type="match status" value="1"/>
</dbReference>
<dbReference type="SMART" id="SM00385">
    <property type="entry name" value="CYCLIN"/>
    <property type="match status" value="2"/>
</dbReference>
<dbReference type="SMART" id="SM01332">
    <property type="entry name" value="Cyclin_C"/>
    <property type="match status" value="1"/>
</dbReference>
<dbReference type="SUPFAM" id="SSF47954">
    <property type="entry name" value="Cyclin-like"/>
    <property type="match status" value="2"/>
</dbReference>
<dbReference type="PROSITE" id="PS00292">
    <property type="entry name" value="CYCLINS"/>
    <property type="match status" value="1"/>
</dbReference>
<keyword id="KW-0131">Cell cycle</keyword>
<keyword id="KW-0132">Cell division</keyword>
<keyword id="KW-0195">Cyclin</keyword>
<keyword id="KW-1185">Reference proteome</keyword>
<evidence type="ECO:0000269" key="1">
    <source>
    </source>
</evidence>
<evidence type="ECO:0000269" key="2">
    <source>
    </source>
</evidence>
<evidence type="ECO:0000305" key="3"/>
<sequence length="414" mass="46267">MATGPVVHPQPVRGDPIDLKNAAAKNRRALGDIGNVDSLIGVEGGKLNRPITRNFRAQLLENAQVAAAANKKAPILDGVTKKQEVVRAVQKKARGDKREPSKPIEVIVISPDTNEVAKAKENKKKVTYSSVLDARSKAASKTLDIDYVDKENDLAAVEYVEDMYIFYKEVVNESKPQMYMHTQPEIDEKMRSILIDWLVEVHVKFDLSPETLYLTVNIIDRFLSLKTVPRRELQLVGVSALLIASKYEEIWPPQVNDLVYVTDNSYNSRQILVMEKTILGNLEWYLTVPTQYVFLVRFIKASGSDQKLENLVHFLAELGLMHHDSLMFCPSMLAASAVYTARCCLNKTPTWTDTLKFHTGYSESQLMDCSKLLAFIHSKAGESKLRGVLKKYSKLGRGAVALISPAKSLMSSAP</sequence>
<organism>
    <name type="scientific">Arabidopsis thaliana</name>
    <name type="common">Mouse-ear cress</name>
    <dbReference type="NCBI Taxonomy" id="3702"/>
    <lineage>
        <taxon>Eukaryota</taxon>
        <taxon>Viridiplantae</taxon>
        <taxon>Streptophyta</taxon>
        <taxon>Embryophyta</taxon>
        <taxon>Tracheophyta</taxon>
        <taxon>Spermatophyta</taxon>
        <taxon>Magnoliopsida</taxon>
        <taxon>eudicotyledons</taxon>
        <taxon>Gunneridae</taxon>
        <taxon>Pentapetalae</taxon>
        <taxon>rosids</taxon>
        <taxon>malvids</taxon>
        <taxon>Brassicales</taxon>
        <taxon>Brassicaceae</taxon>
        <taxon>Camelineae</taxon>
        <taxon>Arabidopsis</taxon>
    </lineage>
</organism>
<comment type="tissue specificity">
    <text evidence="2">Expressed in roots, stems and flowers.</text>
</comment>
<comment type="developmental stage">
    <text evidence="1">Starts to be expressed at the end of S phase, reaches a peak at mitosis and then decreases.</text>
</comment>
<comment type="similarity">
    <text evidence="3">Belongs to the cyclin family. Cyclin AB subfamily.</text>
</comment>
<comment type="sequence caution" evidence="3">
    <conflict type="erroneous gene model prediction">
        <sequence resource="EMBL-CDS" id="AAG51435"/>
    </conflict>
</comment>